<keyword id="KW-0963">Cytoplasm</keyword>
<keyword id="KW-1185">Reference proteome</keyword>
<keyword id="KW-0687">Ribonucleoprotein</keyword>
<keyword id="KW-0689">Ribosomal protein</keyword>
<dbReference type="EMBL" id="CU638744">
    <property type="protein sequence ID" value="CAP71128.1"/>
    <property type="molecule type" value="Genomic_DNA"/>
</dbReference>
<dbReference type="EMBL" id="FO904941">
    <property type="protein sequence ID" value="CDP30526.1"/>
    <property type="molecule type" value="Genomic_DNA"/>
</dbReference>
<dbReference type="RefSeq" id="XP_001909994.1">
    <property type="nucleotide sequence ID" value="XM_001909959.1"/>
</dbReference>
<dbReference type="SMR" id="B2B1Z3"/>
<dbReference type="FunCoup" id="B2B1Z3">
    <property type="interactions" value="1213"/>
</dbReference>
<dbReference type="STRING" id="515849.B2B1Z3"/>
<dbReference type="GeneID" id="6194644"/>
<dbReference type="KEGG" id="pan:PODANSg7031"/>
<dbReference type="VEuPathDB" id="FungiDB:PODANS_6_4950"/>
<dbReference type="eggNOG" id="KOG0830">
    <property type="taxonomic scope" value="Eukaryota"/>
</dbReference>
<dbReference type="HOGENOM" id="CLU_058171_0_1_1"/>
<dbReference type="InParanoid" id="B2B1Z3"/>
<dbReference type="OrthoDB" id="414863at2759"/>
<dbReference type="Proteomes" id="UP000001197">
    <property type="component" value="Chromosome 6"/>
</dbReference>
<dbReference type="GO" id="GO:0022627">
    <property type="term" value="C:cytosolic small ribosomal subunit"/>
    <property type="evidence" value="ECO:0007669"/>
    <property type="project" value="UniProtKB-UniRule"/>
</dbReference>
<dbReference type="GO" id="GO:0003735">
    <property type="term" value="F:structural constituent of ribosome"/>
    <property type="evidence" value="ECO:0007669"/>
    <property type="project" value="UniProtKB-UniRule"/>
</dbReference>
<dbReference type="GO" id="GO:0000028">
    <property type="term" value="P:ribosomal small subunit assembly"/>
    <property type="evidence" value="ECO:0007669"/>
    <property type="project" value="UniProtKB-UniRule"/>
</dbReference>
<dbReference type="GO" id="GO:0006412">
    <property type="term" value="P:translation"/>
    <property type="evidence" value="ECO:0007669"/>
    <property type="project" value="UniProtKB-UniRule"/>
</dbReference>
<dbReference type="CDD" id="cd01425">
    <property type="entry name" value="RPS2"/>
    <property type="match status" value="1"/>
</dbReference>
<dbReference type="FunFam" id="3.40.50.10490:FF:000010">
    <property type="entry name" value="40S ribosomal protein S0"/>
    <property type="match status" value="1"/>
</dbReference>
<dbReference type="Gene3D" id="3.40.50.10490">
    <property type="entry name" value="Glucose-6-phosphate isomerase like protein, domain 1"/>
    <property type="match status" value="1"/>
</dbReference>
<dbReference type="HAMAP" id="MF_03015">
    <property type="entry name" value="Ribosomal_S2_euk"/>
    <property type="match status" value="1"/>
</dbReference>
<dbReference type="InterPro" id="IPR001865">
    <property type="entry name" value="Ribosomal_uS2"/>
</dbReference>
<dbReference type="InterPro" id="IPR018130">
    <property type="entry name" value="Ribosomal_uS2_CS"/>
</dbReference>
<dbReference type="InterPro" id="IPR027498">
    <property type="entry name" value="Ribosomal_uS2_euk"/>
</dbReference>
<dbReference type="InterPro" id="IPR005707">
    <property type="entry name" value="Ribosomal_uS2_euk/arc"/>
</dbReference>
<dbReference type="InterPro" id="IPR023591">
    <property type="entry name" value="Ribosomal_uS2_flav_dom_sf"/>
</dbReference>
<dbReference type="NCBIfam" id="TIGR01012">
    <property type="entry name" value="uS2_euk_arch"/>
    <property type="match status" value="1"/>
</dbReference>
<dbReference type="PANTHER" id="PTHR11489">
    <property type="entry name" value="40S RIBOSOMAL PROTEIN SA"/>
    <property type="match status" value="1"/>
</dbReference>
<dbReference type="Pfam" id="PF00318">
    <property type="entry name" value="Ribosomal_S2"/>
    <property type="match status" value="2"/>
</dbReference>
<dbReference type="PRINTS" id="PR00395">
    <property type="entry name" value="RIBOSOMALS2"/>
</dbReference>
<dbReference type="SUPFAM" id="SSF52313">
    <property type="entry name" value="Ribosomal protein S2"/>
    <property type="match status" value="1"/>
</dbReference>
<dbReference type="PROSITE" id="PS00963">
    <property type="entry name" value="RIBOSOMAL_S2_2"/>
    <property type="match status" value="1"/>
</dbReference>
<name>RSSA_PODAN</name>
<reference key="1">
    <citation type="journal article" date="2008" name="Genome Biol.">
        <title>The genome sequence of the model ascomycete fungus Podospora anserina.</title>
        <authorList>
            <person name="Espagne E."/>
            <person name="Lespinet O."/>
            <person name="Malagnac F."/>
            <person name="Da Silva C."/>
            <person name="Jaillon O."/>
            <person name="Porcel B.M."/>
            <person name="Couloux A."/>
            <person name="Aury J.-M."/>
            <person name="Segurens B."/>
            <person name="Poulain J."/>
            <person name="Anthouard V."/>
            <person name="Grossetete S."/>
            <person name="Khalili H."/>
            <person name="Coppin E."/>
            <person name="Dequard-Chablat M."/>
            <person name="Picard M."/>
            <person name="Contamine V."/>
            <person name="Arnaise S."/>
            <person name="Bourdais A."/>
            <person name="Berteaux-Lecellier V."/>
            <person name="Gautheret D."/>
            <person name="de Vries R.P."/>
            <person name="Battaglia E."/>
            <person name="Coutinho P.M."/>
            <person name="Danchin E.G.J."/>
            <person name="Henrissat B."/>
            <person name="El Khoury R."/>
            <person name="Sainsard-Chanet A."/>
            <person name="Boivin A."/>
            <person name="Pinan-Lucarre B."/>
            <person name="Sellem C.H."/>
            <person name="Debuchy R."/>
            <person name="Wincker P."/>
            <person name="Weissenbach J."/>
            <person name="Silar P."/>
        </authorList>
    </citation>
    <scope>NUCLEOTIDE SEQUENCE [LARGE SCALE GENOMIC DNA]</scope>
    <source>
        <strain>S / ATCC MYA-4624 / DSM 980 / FGSC 10383</strain>
    </source>
</reference>
<reference key="2">
    <citation type="journal article" date="2014" name="Genetics">
        <title>Maintaining two mating types: Structure of the mating type locus and its role in heterokaryosis in Podospora anserina.</title>
        <authorList>
            <person name="Grognet P."/>
            <person name="Bidard F."/>
            <person name="Kuchly C."/>
            <person name="Tong L.C.H."/>
            <person name="Coppin E."/>
            <person name="Benkhali J.A."/>
            <person name="Couloux A."/>
            <person name="Wincker P."/>
            <person name="Debuchy R."/>
            <person name="Silar P."/>
        </authorList>
    </citation>
    <scope>GENOME REANNOTATION</scope>
    <source>
        <strain>S / ATCC MYA-4624 / DSM 980 / FGSC 10383</strain>
    </source>
</reference>
<feature type="chain" id="PRO_0000371643" description="Small ribosomal subunit protein uS2">
    <location>
        <begin position="1"/>
        <end position="291"/>
    </location>
</feature>
<feature type="region of interest" description="Disordered" evidence="2">
    <location>
        <begin position="255"/>
        <end position="291"/>
    </location>
</feature>
<organism>
    <name type="scientific">Podospora anserina (strain S / ATCC MYA-4624 / DSM 980 / FGSC 10383)</name>
    <name type="common">Pleurage anserina</name>
    <dbReference type="NCBI Taxonomy" id="515849"/>
    <lineage>
        <taxon>Eukaryota</taxon>
        <taxon>Fungi</taxon>
        <taxon>Dikarya</taxon>
        <taxon>Ascomycota</taxon>
        <taxon>Pezizomycotina</taxon>
        <taxon>Sordariomycetes</taxon>
        <taxon>Sordariomycetidae</taxon>
        <taxon>Sordariales</taxon>
        <taxon>Podosporaceae</taxon>
        <taxon>Podospora</taxon>
        <taxon>Podospora anserina</taxon>
    </lineage>
</organism>
<comment type="function">
    <text evidence="1">Required for the assembly and/or stability of the 40S ribosomal subunit. Required for the processing of the 20S rRNA-precursor to mature 18S rRNA in a late step of the maturation of 40S ribosomal subunits.</text>
</comment>
<comment type="subunit">
    <text evidence="1">Component of the small ribosomal subunit. Mature ribosomes consist of a small (40S) and a large (60S) subunit. The 40S subunit contains about 33 different proteins and 1 molecule of RNA (18S). The 60S subunit contains about 49 different proteins and 3 molecules of RNA (25S, 5.8S and 5S). Interacts with RPS21.</text>
</comment>
<comment type="subcellular location">
    <subcellularLocation>
        <location evidence="1">Cytoplasm</location>
    </subcellularLocation>
</comment>
<comment type="similarity">
    <text evidence="1">Belongs to the universal ribosomal protein uS2 family.</text>
</comment>
<accession>B2B1Z3</accession>
<accession>A0A090CP19</accession>
<protein>
    <recommendedName>
        <fullName evidence="1">Small ribosomal subunit protein uS2</fullName>
    </recommendedName>
    <alternativeName>
        <fullName evidence="3">40S ribosomal protein S0</fullName>
    </alternativeName>
</protein>
<proteinExistence type="inferred from homology"/>
<sequence length="291" mass="31493">MAPANLPSIFNATSQDIEQLLAAQCHIGSKNLGVHAQPYLWKTRADGVNIINIGKTWEKIVLAARIIAAIDNPSDVCVISARPYGQRAVLKFAAHTGAQAIAGRFTPGSFTNYITRSFKEPRLIVVTDPRTDAQAIKEASYVNIPVIALCDTDSPTEYVDVAIPTNNKGRHSIGLVWWMLAREVLRLRGTIYNREAPWDVMVDLYFYRDPEAEAEEKVEEEKLPGVDEEGVAAIESGFPAAGGDWEAAPAAFPAAGAATGEWSEAQGAQWETGTGAPAADWAAEPAKESSW</sequence>
<evidence type="ECO:0000255" key="1">
    <source>
        <dbReference type="HAMAP-Rule" id="MF_03015"/>
    </source>
</evidence>
<evidence type="ECO:0000256" key="2">
    <source>
        <dbReference type="SAM" id="MobiDB-lite"/>
    </source>
</evidence>
<evidence type="ECO:0000305" key="3"/>
<gene>
    <name evidence="1" type="primary">RPS0</name>
    <name type="ordered locus">Pa_6_4950</name>
    <name type="ORF">PODANS_6_4950</name>
</gene>